<keyword id="KW-0413">Isomerase</keyword>
<keyword id="KW-0460">Magnesium</keyword>
<keyword id="KW-0479">Metal-binding</keyword>
<keyword id="KW-0597">Phosphoprotein</keyword>
<evidence type="ECO:0000255" key="1">
    <source>
        <dbReference type="HAMAP-Rule" id="MF_01554"/>
    </source>
</evidence>
<sequence>MTRDVSQLFGTDGVRGRANFEPMTVETSVLLGKAIAGVLLEKHAGKHRVVVGKDTRLSGYMFENALIAGLTSMGIETLMLGPIPTPGVAFITRAYRADAGIMISASHNPYRDNGIKIFSSDGFKIGQAVEERIEAMVASKDFGKLPDDHAVGKNKRVKDATGRYIEYAKATFPKGRTLKGLRIVLDCAHGATYRVAPSVFEELDAEVICYGCEPSGCNINAGCGALWPSTIQKAVIEHKADVGIALDGDGDRLIMVDEKGHIVDGDMLLSICASDLKRRQALPDNRVVATVMTNFGVLRYLESLGIQVTISPVGDRHVLQHMLENQAVLGGEQSGHMIFLDYNTTGDGIVSALQVLRIMIESESTLSDLTACIVKSPQALINVPVTKKVPLESLANVQGVLKEVKEVLGDSGRILLRYSGTENICRVMVEGTKKHQVDSLAKTIVDVVEAEIGAGISE</sequence>
<accession>B0B944</accession>
<feature type="chain" id="PRO_1000201073" description="Phosphoglucosamine mutase">
    <location>
        <begin position="1"/>
        <end position="458"/>
    </location>
</feature>
<feature type="active site" description="Phosphoserine intermediate" evidence="1">
    <location>
        <position position="106"/>
    </location>
</feature>
<feature type="binding site" description="via phosphate group" evidence="1">
    <location>
        <position position="106"/>
    </location>
    <ligand>
        <name>Mg(2+)</name>
        <dbReference type="ChEBI" id="CHEBI:18420"/>
    </ligand>
</feature>
<feature type="binding site" evidence="1">
    <location>
        <position position="247"/>
    </location>
    <ligand>
        <name>Mg(2+)</name>
        <dbReference type="ChEBI" id="CHEBI:18420"/>
    </ligand>
</feature>
<feature type="binding site" evidence="1">
    <location>
        <position position="249"/>
    </location>
    <ligand>
        <name>Mg(2+)</name>
        <dbReference type="ChEBI" id="CHEBI:18420"/>
    </ligand>
</feature>
<feature type="binding site" evidence="1">
    <location>
        <position position="251"/>
    </location>
    <ligand>
        <name>Mg(2+)</name>
        <dbReference type="ChEBI" id="CHEBI:18420"/>
    </ligand>
</feature>
<feature type="modified residue" description="Phosphoserine" evidence="1">
    <location>
        <position position="106"/>
    </location>
</feature>
<dbReference type="EC" id="5.4.2.10" evidence="1"/>
<dbReference type="EMBL" id="AM884176">
    <property type="protein sequence ID" value="CAP03631.1"/>
    <property type="molecule type" value="Genomic_DNA"/>
</dbReference>
<dbReference type="RefSeq" id="WP_009873427.1">
    <property type="nucleotide sequence ID" value="NC_010287.1"/>
</dbReference>
<dbReference type="RefSeq" id="YP_001654277.1">
    <property type="nucleotide sequence ID" value="NC_010287.1"/>
</dbReference>
<dbReference type="SMR" id="B0B944"/>
<dbReference type="KEGG" id="ctb:CTL0187"/>
<dbReference type="PATRIC" id="fig|471472.4.peg.202"/>
<dbReference type="HOGENOM" id="CLU_016950_7_0_0"/>
<dbReference type="Proteomes" id="UP001154402">
    <property type="component" value="Chromosome"/>
</dbReference>
<dbReference type="GO" id="GO:0005829">
    <property type="term" value="C:cytosol"/>
    <property type="evidence" value="ECO:0007669"/>
    <property type="project" value="TreeGrafter"/>
</dbReference>
<dbReference type="GO" id="GO:0000287">
    <property type="term" value="F:magnesium ion binding"/>
    <property type="evidence" value="ECO:0007669"/>
    <property type="project" value="UniProtKB-UniRule"/>
</dbReference>
<dbReference type="GO" id="GO:0008966">
    <property type="term" value="F:phosphoglucosamine mutase activity"/>
    <property type="evidence" value="ECO:0007669"/>
    <property type="project" value="UniProtKB-UniRule"/>
</dbReference>
<dbReference type="GO" id="GO:0004615">
    <property type="term" value="F:phosphomannomutase activity"/>
    <property type="evidence" value="ECO:0007669"/>
    <property type="project" value="TreeGrafter"/>
</dbReference>
<dbReference type="GO" id="GO:0005975">
    <property type="term" value="P:carbohydrate metabolic process"/>
    <property type="evidence" value="ECO:0007669"/>
    <property type="project" value="InterPro"/>
</dbReference>
<dbReference type="GO" id="GO:0009252">
    <property type="term" value="P:peptidoglycan biosynthetic process"/>
    <property type="evidence" value="ECO:0007669"/>
    <property type="project" value="TreeGrafter"/>
</dbReference>
<dbReference type="GO" id="GO:0006048">
    <property type="term" value="P:UDP-N-acetylglucosamine biosynthetic process"/>
    <property type="evidence" value="ECO:0007669"/>
    <property type="project" value="TreeGrafter"/>
</dbReference>
<dbReference type="CDD" id="cd05802">
    <property type="entry name" value="GlmM"/>
    <property type="match status" value="1"/>
</dbReference>
<dbReference type="FunFam" id="3.30.310.50:FF:000001">
    <property type="entry name" value="Phosphoglucosamine mutase"/>
    <property type="match status" value="1"/>
</dbReference>
<dbReference type="FunFam" id="3.40.120.10:FF:000001">
    <property type="entry name" value="Phosphoglucosamine mutase"/>
    <property type="match status" value="1"/>
</dbReference>
<dbReference type="FunFam" id="3.40.120.10:FF:000003">
    <property type="entry name" value="Phosphoglucosamine mutase"/>
    <property type="match status" value="1"/>
</dbReference>
<dbReference type="Gene3D" id="3.40.120.10">
    <property type="entry name" value="Alpha-D-Glucose-1,6-Bisphosphate, subunit A, domain 3"/>
    <property type="match status" value="3"/>
</dbReference>
<dbReference type="Gene3D" id="3.30.310.50">
    <property type="entry name" value="Alpha-D-phosphohexomutase, C-terminal domain"/>
    <property type="match status" value="1"/>
</dbReference>
<dbReference type="HAMAP" id="MF_01554_B">
    <property type="entry name" value="GlmM_B"/>
    <property type="match status" value="1"/>
</dbReference>
<dbReference type="InterPro" id="IPR005844">
    <property type="entry name" value="A-D-PHexomutase_a/b/a-I"/>
</dbReference>
<dbReference type="InterPro" id="IPR016055">
    <property type="entry name" value="A-D-PHexomutase_a/b/a-I/II/III"/>
</dbReference>
<dbReference type="InterPro" id="IPR005845">
    <property type="entry name" value="A-D-PHexomutase_a/b/a-II"/>
</dbReference>
<dbReference type="InterPro" id="IPR005846">
    <property type="entry name" value="A-D-PHexomutase_a/b/a-III"/>
</dbReference>
<dbReference type="InterPro" id="IPR005843">
    <property type="entry name" value="A-D-PHexomutase_C"/>
</dbReference>
<dbReference type="InterPro" id="IPR036900">
    <property type="entry name" value="A-D-PHexomutase_C_sf"/>
</dbReference>
<dbReference type="InterPro" id="IPR016066">
    <property type="entry name" value="A-D-PHexomutase_CS"/>
</dbReference>
<dbReference type="InterPro" id="IPR005841">
    <property type="entry name" value="Alpha-D-phosphohexomutase_SF"/>
</dbReference>
<dbReference type="InterPro" id="IPR006352">
    <property type="entry name" value="GlmM_bact"/>
</dbReference>
<dbReference type="InterPro" id="IPR050060">
    <property type="entry name" value="Phosphoglucosamine_mutase"/>
</dbReference>
<dbReference type="NCBIfam" id="TIGR01455">
    <property type="entry name" value="glmM"/>
    <property type="match status" value="1"/>
</dbReference>
<dbReference type="NCBIfam" id="NF008139">
    <property type="entry name" value="PRK10887.1"/>
    <property type="match status" value="1"/>
</dbReference>
<dbReference type="PANTHER" id="PTHR42946:SF1">
    <property type="entry name" value="PHOSPHOGLUCOMUTASE (ALPHA-D-GLUCOSE-1,6-BISPHOSPHATE-DEPENDENT)"/>
    <property type="match status" value="1"/>
</dbReference>
<dbReference type="PANTHER" id="PTHR42946">
    <property type="entry name" value="PHOSPHOHEXOSE MUTASE"/>
    <property type="match status" value="1"/>
</dbReference>
<dbReference type="Pfam" id="PF02878">
    <property type="entry name" value="PGM_PMM_I"/>
    <property type="match status" value="1"/>
</dbReference>
<dbReference type="Pfam" id="PF02879">
    <property type="entry name" value="PGM_PMM_II"/>
    <property type="match status" value="1"/>
</dbReference>
<dbReference type="Pfam" id="PF02880">
    <property type="entry name" value="PGM_PMM_III"/>
    <property type="match status" value="1"/>
</dbReference>
<dbReference type="Pfam" id="PF00408">
    <property type="entry name" value="PGM_PMM_IV"/>
    <property type="match status" value="1"/>
</dbReference>
<dbReference type="PRINTS" id="PR00509">
    <property type="entry name" value="PGMPMM"/>
</dbReference>
<dbReference type="SUPFAM" id="SSF55957">
    <property type="entry name" value="Phosphoglucomutase, C-terminal domain"/>
    <property type="match status" value="1"/>
</dbReference>
<dbReference type="SUPFAM" id="SSF53738">
    <property type="entry name" value="Phosphoglucomutase, first 3 domains"/>
    <property type="match status" value="3"/>
</dbReference>
<dbReference type="PROSITE" id="PS00710">
    <property type="entry name" value="PGM_PMM"/>
    <property type="match status" value="1"/>
</dbReference>
<name>GLMM_CHLT2</name>
<gene>
    <name evidence="1" type="primary">glmM</name>
    <name type="ordered locus">CTL0187</name>
</gene>
<reference key="1">
    <citation type="journal article" date="2008" name="Genome Res.">
        <title>Chlamydia trachomatis: genome sequence analysis of lymphogranuloma venereum isolates.</title>
        <authorList>
            <person name="Thomson N.R."/>
            <person name="Holden M.T.G."/>
            <person name="Carder C."/>
            <person name="Lennard N."/>
            <person name="Lockey S.J."/>
            <person name="Marsh P."/>
            <person name="Skipp P."/>
            <person name="O'Connor C.D."/>
            <person name="Goodhead I."/>
            <person name="Norbertzcak H."/>
            <person name="Harris B."/>
            <person name="Ormond D."/>
            <person name="Rance R."/>
            <person name="Quail M.A."/>
            <person name="Parkhill J."/>
            <person name="Stephens R.S."/>
            <person name="Clarke I.N."/>
        </authorList>
    </citation>
    <scope>NUCLEOTIDE SEQUENCE [LARGE SCALE GENOMIC DNA]</scope>
    <source>
        <strain>ATCC VR-902B / DSM 19102 / 434/Bu</strain>
    </source>
</reference>
<comment type="function">
    <text evidence="1">Catalyzes the conversion of glucosamine-6-phosphate to glucosamine-1-phosphate.</text>
</comment>
<comment type="catalytic activity">
    <reaction evidence="1">
        <text>alpha-D-glucosamine 1-phosphate = D-glucosamine 6-phosphate</text>
        <dbReference type="Rhea" id="RHEA:23424"/>
        <dbReference type="ChEBI" id="CHEBI:58516"/>
        <dbReference type="ChEBI" id="CHEBI:58725"/>
        <dbReference type="EC" id="5.4.2.10"/>
    </reaction>
</comment>
<comment type="cofactor">
    <cofactor evidence="1">
        <name>Mg(2+)</name>
        <dbReference type="ChEBI" id="CHEBI:18420"/>
    </cofactor>
    <text evidence="1">Binds 1 Mg(2+) ion per subunit.</text>
</comment>
<comment type="PTM">
    <text evidence="1">Activated by phosphorylation.</text>
</comment>
<comment type="similarity">
    <text evidence="1">Belongs to the phosphohexose mutase family.</text>
</comment>
<protein>
    <recommendedName>
        <fullName evidence="1">Phosphoglucosamine mutase</fullName>
        <ecNumber evidence="1">5.4.2.10</ecNumber>
    </recommendedName>
</protein>
<organism>
    <name type="scientific">Chlamydia trachomatis serovar L2 (strain ATCC VR-902B / DSM 19102 / 434/Bu)</name>
    <dbReference type="NCBI Taxonomy" id="471472"/>
    <lineage>
        <taxon>Bacteria</taxon>
        <taxon>Pseudomonadati</taxon>
        <taxon>Chlamydiota</taxon>
        <taxon>Chlamydiia</taxon>
        <taxon>Chlamydiales</taxon>
        <taxon>Chlamydiaceae</taxon>
        <taxon>Chlamydia/Chlamydophila group</taxon>
        <taxon>Chlamydia</taxon>
    </lineage>
</organism>
<proteinExistence type="inferred from homology"/>